<proteinExistence type="inferred from homology"/>
<feature type="chain" id="PRO_1000080343" description="Large ribosomal subunit protein bL19">
    <location>
        <begin position="1"/>
        <end position="116"/>
    </location>
</feature>
<organism>
    <name type="scientific">Clostridium beijerinckii (strain ATCC 51743 / NCIMB 8052)</name>
    <name type="common">Clostridium acetobutylicum</name>
    <dbReference type="NCBI Taxonomy" id="290402"/>
    <lineage>
        <taxon>Bacteria</taxon>
        <taxon>Bacillati</taxon>
        <taxon>Bacillota</taxon>
        <taxon>Clostridia</taxon>
        <taxon>Eubacteriales</taxon>
        <taxon>Clostridiaceae</taxon>
        <taxon>Clostridium</taxon>
    </lineage>
</organism>
<protein>
    <recommendedName>
        <fullName evidence="1">Large ribosomal subunit protein bL19</fullName>
    </recommendedName>
    <alternativeName>
        <fullName evidence="2">50S ribosomal protein L19</fullName>
    </alternativeName>
</protein>
<gene>
    <name evidence="1" type="primary">rplS</name>
    <name type="ordered locus">Cbei_1180</name>
</gene>
<name>RL19_CLOB8</name>
<sequence length="116" mass="13368">MNEIIRAIEAEQIRTDLPKFAIGDTIKVYVKIQEGNKERVQMFEGTVIKKQNGGLRETFTVRRVAYGTGVERTFPMNAPIIDKIEIARKGKVRRAKLYYLRDRVGKSAKVKELLTR</sequence>
<accession>A6LSN2</accession>
<reference key="1">
    <citation type="submission" date="2007-06" db="EMBL/GenBank/DDBJ databases">
        <title>Complete sequence of Clostridium beijerinckii NCIMB 8052.</title>
        <authorList>
            <consortium name="US DOE Joint Genome Institute"/>
            <person name="Copeland A."/>
            <person name="Lucas S."/>
            <person name="Lapidus A."/>
            <person name="Barry K."/>
            <person name="Detter J.C."/>
            <person name="Glavina del Rio T."/>
            <person name="Hammon N."/>
            <person name="Israni S."/>
            <person name="Dalin E."/>
            <person name="Tice H."/>
            <person name="Pitluck S."/>
            <person name="Sims D."/>
            <person name="Brettin T."/>
            <person name="Bruce D."/>
            <person name="Tapia R."/>
            <person name="Brainard J."/>
            <person name="Schmutz J."/>
            <person name="Larimer F."/>
            <person name="Land M."/>
            <person name="Hauser L."/>
            <person name="Kyrpides N."/>
            <person name="Mikhailova N."/>
            <person name="Bennet G."/>
            <person name="Cann I."/>
            <person name="Chen J.-S."/>
            <person name="Contreras A.L."/>
            <person name="Jones D."/>
            <person name="Kashket E."/>
            <person name="Mitchell W."/>
            <person name="Stoddard S."/>
            <person name="Schwarz W."/>
            <person name="Qureshi N."/>
            <person name="Young M."/>
            <person name="Shi Z."/>
            <person name="Ezeji T."/>
            <person name="White B."/>
            <person name="Blaschek H."/>
            <person name="Richardson P."/>
        </authorList>
    </citation>
    <scope>NUCLEOTIDE SEQUENCE [LARGE SCALE GENOMIC DNA]</scope>
    <source>
        <strain>ATCC 51743 / NCIMB 8052</strain>
    </source>
</reference>
<keyword id="KW-0687">Ribonucleoprotein</keyword>
<keyword id="KW-0689">Ribosomal protein</keyword>
<dbReference type="EMBL" id="CP000721">
    <property type="protein sequence ID" value="ABR33362.1"/>
    <property type="molecule type" value="Genomic_DNA"/>
</dbReference>
<dbReference type="RefSeq" id="WP_011968517.1">
    <property type="nucleotide sequence ID" value="NC_009617.1"/>
</dbReference>
<dbReference type="SMR" id="A6LSN2"/>
<dbReference type="KEGG" id="cbe:Cbei_1180"/>
<dbReference type="eggNOG" id="COG0335">
    <property type="taxonomic scope" value="Bacteria"/>
</dbReference>
<dbReference type="HOGENOM" id="CLU_103507_2_1_9"/>
<dbReference type="Proteomes" id="UP000000565">
    <property type="component" value="Chromosome"/>
</dbReference>
<dbReference type="GO" id="GO:0022625">
    <property type="term" value="C:cytosolic large ribosomal subunit"/>
    <property type="evidence" value="ECO:0007669"/>
    <property type="project" value="TreeGrafter"/>
</dbReference>
<dbReference type="GO" id="GO:0003735">
    <property type="term" value="F:structural constituent of ribosome"/>
    <property type="evidence" value="ECO:0007669"/>
    <property type="project" value="InterPro"/>
</dbReference>
<dbReference type="GO" id="GO:0006412">
    <property type="term" value="P:translation"/>
    <property type="evidence" value="ECO:0007669"/>
    <property type="project" value="UniProtKB-UniRule"/>
</dbReference>
<dbReference type="FunFam" id="2.30.30.790:FF:000001">
    <property type="entry name" value="50S ribosomal protein L19"/>
    <property type="match status" value="1"/>
</dbReference>
<dbReference type="Gene3D" id="2.30.30.790">
    <property type="match status" value="1"/>
</dbReference>
<dbReference type="HAMAP" id="MF_00402">
    <property type="entry name" value="Ribosomal_bL19"/>
    <property type="match status" value="1"/>
</dbReference>
<dbReference type="InterPro" id="IPR001857">
    <property type="entry name" value="Ribosomal_bL19"/>
</dbReference>
<dbReference type="InterPro" id="IPR018257">
    <property type="entry name" value="Ribosomal_bL19_CS"/>
</dbReference>
<dbReference type="InterPro" id="IPR038657">
    <property type="entry name" value="Ribosomal_bL19_sf"/>
</dbReference>
<dbReference type="InterPro" id="IPR008991">
    <property type="entry name" value="Translation_prot_SH3-like_sf"/>
</dbReference>
<dbReference type="NCBIfam" id="TIGR01024">
    <property type="entry name" value="rplS_bact"/>
    <property type="match status" value="1"/>
</dbReference>
<dbReference type="PANTHER" id="PTHR15680:SF9">
    <property type="entry name" value="LARGE RIBOSOMAL SUBUNIT PROTEIN BL19M"/>
    <property type="match status" value="1"/>
</dbReference>
<dbReference type="PANTHER" id="PTHR15680">
    <property type="entry name" value="RIBOSOMAL PROTEIN L19"/>
    <property type="match status" value="1"/>
</dbReference>
<dbReference type="Pfam" id="PF01245">
    <property type="entry name" value="Ribosomal_L19"/>
    <property type="match status" value="1"/>
</dbReference>
<dbReference type="PIRSF" id="PIRSF002191">
    <property type="entry name" value="Ribosomal_L19"/>
    <property type="match status" value="1"/>
</dbReference>
<dbReference type="PRINTS" id="PR00061">
    <property type="entry name" value="RIBOSOMALL19"/>
</dbReference>
<dbReference type="SUPFAM" id="SSF50104">
    <property type="entry name" value="Translation proteins SH3-like domain"/>
    <property type="match status" value="1"/>
</dbReference>
<dbReference type="PROSITE" id="PS01015">
    <property type="entry name" value="RIBOSOMAL_L19"/>
    <property type="match status" value="1"/>
</dbReference>
<evidence type="ECO:0000255" key="1">
    <source>
        <dbReference type="HAMAP-Rule" id="MF_00402"/>
    </source>
</evidence>
<evidence type="ECO:0000305" key="2"/>
<comment type="function">
    <text evidence="1">This protein is located at the 30S-50S ribosomal subunit interface and may play a role in the structure and function of the aminoacyl-tRNA binding site.</text>
</comment>
<comment type="similarity">
    <text evidence="1">Belongs to the bacterial ribosomal protein bL19 family.</text>
</comment>